<sequence length="148" mass="17247">MTIADNKKAFFDYFIEERYEAGMALEGWEVKAIRANRAQIKEGYVVIRNAELFLIGAHISPLQSASTHVHPDPVRTRKLLLHAEEIKKLIGKVEQRGYTLVPLNLHYTRGRVKCEIGLAKGKKQFDKRETEKDRDWQREKARLMREKA</sequence>
<gene>
    <name evidence="1" type="primary">smpB</name>
    <name type="ordered locus">Rpic_1301</name>
</gene>
<evidence type="ECO:0000255" key="1">
    <source>
        <dbReference type="HAMAP-Rule" id="MF_00023"/>
    </source>
</evidence>
<evidence type="ECO:0000256" key="2">
    <source>
        <dbReference type="SAM" id="MobiDB-lite"/>
    </source>
</evidence>
<feature type="chain" id="PRO_1000090175" description="SsrA-binding protein">
    <location>
        <begin position="1"/>
        <end position="148"/>
    </location>
</feature>
<feature type="region of interest" description="Disordered" evidence="2">
    <location>
        <begin position="124"/>
        <end position="148"/>
    </location>
</feature>
<accession>B2UBC4</accession>
<reference key="1">
    <citation type="submission" date="2008-05" db="EMBL/GenBank/DDBJ databases">
        <title>Complete sequence of chromosome 1 of Ralstonia pickettii 12J.</title>
        <authorList>
            <person name="Lucas S."/>
            <person name="Copeland A."/>
            <person name="Lapidus A."/>
            <person name="Glavina del Rio T."/>
            <person name="Dalin E."/>
            <person name="Tice H."/>
            <person name="Bruce D."/>
            <person name="Goodwin L."/>
            <person name="Pitluck S."/>
            <person name="Meincke L."/>
            <person name="Brettin T."/>
            <person name="Detter J.C."/>
            <person name="Han C."/>
            <person name="Kuske C.R."/>
            <person name="Schmutz J."/>
            <person name="Larimer F."/>
            <person name="Land M."/>
            <person name="Hauser L."/>
            <person name="Kyrpides N."/>
            <person name="Mikhailova N."/>
            <person name="Marsh T."/>
            <person name="Richardson P."/>
        </authorList>
    </citation>
    <scope>NUCLEOTIDE SEQUENCE [LARGE SCALE GENOMIC DNA]</scope>
    <source>
        <strain>12J</strain>
    </source>
</reference>
<proteinExistence type="inferred from homology"/>
<protein>
    <recommendedName>
        <fullName evidence="1">SsrA-binding protein</fullName>
    </recommendedName>
    <alternativeName>
        <fullName evidence="1">Small protein B</fullName>
    </alternativeName>
</protein>
<keyword id="KW-0963">Cytoplasm</keyword>
<keyword id="KW-0694">RNA-binding</keyword>
<organism>
    <name type="scientific">Ralstonia pickettii (strain 12J)</name>
    <dbReference type="NCBI Taxonomy" id="402626"/>
    <lineage>
        <taxon>Bacteria</taxon>
        <taxon>Pseudomonadati</taxon>
        <taxon>Pseudomonadota</taxon>
        <taxon>Betaproteobacteria</taxon>
        <taxon>Burkholderiales</taxon>
        <taxon>Burkholderiaceae</taxon>
        <taxon>Ralstonia</taxon>
    </lineage>
</organism>
<comment type="function">
    <text evidence="1">Required for rescue of stalled ribosomes mediated by trans-translation. Binds to transfer-messenger RNA (tmRNA), required for stable association of tmRNA with ribosomes. tmRNA and SmpB together mimic tRNA shape, replacing the anticodon stem-loop with SmpB. tmRNA is encoded by the ssrA gene; the 2 termini fold to resemble tRNA(Ala) and it encodes a 'tag peptide', a short internal open reading frame. During trans-translation Ala-aminoacylated tmRNA acts like a tRNA, entering the A-site of stalled ribosomes, displacing the stalled mRNA. The ribosome then switches to translate the ORF on the tmRNA; the nascent peptide is terminated with the 'tag peptide' encoded by the tmRNA and targeted for degradation. The ribosome is freed to recommence translation, which seems to be the essential function of trans-translation.</text>
</comment>
<comment type="subcellular location">
    <subcellularLocation>
        <location evidence="1">Cytoplasm</location>
    </subcellularLocation>
    <text evidence="1">The tmRNA-SmpB complex associates with stalled 70S ribosomes.</text>
</comment>
<comment type="similarity">
    <text evidence="1">Belongs to the SmpB family.</text>
</comment>
<dbReference type="EMBL" id="CP001068">
    <property type="protein sequence ID" value="ACD26445.1"/>
    <property type="molecule type" value="Genomic_DNA"/>
</dbReference>
<dbReference type="SMR" id="B2UBC4"/>
<dbReference type="STRING" id="402626.Rpic_1301"/>
<dbReference type="KEGG" id="rpi:Rpic_1301"/>
<dbReference type="PATRIC" id="fig|402626.5.peg.2507"/>
<dbReference type="eggNOG" id="COG0691">
    <property type="taxonomic scope" value="Bacteria"/>
</dbReference>
<dbReference type="HOGENOM" id="CLU_108953_3_0_4"/>
<dbReference type="GO" id="GO:0005829">
    <property type="term" value="C:cytosol"/>
    <property type="evidence" value="ECO:0007669"/>
    <property type="project" value="TreeGrafter"/>
</dbReference>
<dbReference type="GO" id="GO:0003723">
    <property type="term" value="F:RNA binding"/>
    <property type="evidence" value="ECO:0007669"/>
    <property type="project" value="UniProtKB-UniRule"/>
</dbReference>
<dbReference type="GO" id="GO:0070929">
    <property type="term" value="P:trans-translation"/>
    <property type="evidence" value="ECO:0007669"/>
    <property type="project" value="UniProtKB-UniRule"/>
</dbReference>
<dbReference type="CDD" id="cd09294">
    <property type="entry name" value="SmpB"/>
    <property type="match status" value="1"/>
</dbReference>
<dbReference type="Gene3D" id="2.40.280.10">
    <property type="match status" value="1"/>
</dbReference>
<dbReference type="HAMAP" id="MF_00023">
    <property type="entry name" value="SmpB"/>
    <property type="match status" value="1"/>
</dbReference>
<dbReference type="InterPro" id="IPR023620">
    <property type="entry name" value="SmpB"/>
</dbReference>
<dbReference type="InterPro" id="IPR000037">
    <property type="entry name" value="SsrA-bd_prot"/>
</dbReference>
<dbReference type="InterPro" id="IPR020081">
    <property type="entry name" value="SsrA-bd_prot_CS"/>
</dbReference>
<dbReference type="NCBIfam" id="NF003843">
    <property type="entry name" value="PRK05422.1"/>
    <property type="match status" value="1"/>
</dbReference>
<dbReference type="NCBIfam" id="TIGR00086">
    <property type="entry name" value="smpB"/>
    <property type="match status" value="1"/>
</dbReference>
<dbReference type="PANTHER" id="PTHR30308:SF2">
    <property type="entry name" value="SSRA-BINDING PROTEIN"/>
    <property type="match status" value="1"/>
</dbReference>
<dbReference type="PANTHER" id="PTHR30308">
    <property type="entry name" value="TMRNA-BINDING COMPONENT OF TRANS-TRANSLATION TAGGING COMPLEX"/>
    <property type="match status" value="1"/>
</dbReference>
<dbReference type="Pfam" id="PF01668">
    <property type="entry name" value="SmpB"/>
    <property type="match status" value="1"/>
</dbReference>
<dbReference type="SUPFAM" id="SSF74982">
    <property type="entry name" value="Small protein B (SmpB)"/>
    <property type="match status" value="1"/>
</dbReference>
<dbReference type="PROSITE" id="PS01317">
    <property type="entry name" value="SSRP"/>
    <property type="match status" value="1"/>
</dbReference>
<name>SSRP_RALPJ</name>